<name>ISDC_STAAE</name>
<feature type="signal peptide" evidence="3">
    <location>
        <begin position="1"/>
        <end position="28"/>
    </location>
</feature>
<feature type="chain" id="PRO_0000317043" description="Iron-regulated surface determinant protein C">
    <location>
        <begin position="29"/>
        <end position="192"/>
    </location>
</feature>
<feature type="propeptide" id="PRO_0000317044" description="Removed by sortase B" evidence="2">
    <location>
        <begin position="193"/>
        <end position="227"/>
    </location>
</feature>
<feature type="domain" description="NEAT" evidence="4">
    <location>
        <begin position="29"/>
        <end position="150"/>
    </location>
</feature>
<feature type="region of interest" description="Disordered" evidence="5">
    <location>
        <begin position="149"/>
        <end position="191"/>
    </location>
</feature>
<feature type="short sequence motif" description="NPQTN sorting signal" evidence="2">
    <location>
        <begin position="189"/>
        <end position="193"/>
    </location>
</feature>
<feature type="compositionally biased region" description="Low complexity" evidence="5">
    <location>
        <begin position="161"/>
        <end position="175"/>
    </location>
</feature>
<feature type="binding site" evidence="2">
    <location>
        <position position="47"/>
    </location>
    <ligand>
        <name>heme</name>
        <dbReference type="ChEBI" id="CHEBI:30413"/>
    </ligand>
</feature>
<feature type="binding site" evidence="2">
    <location>
        <position position="48"/>
    </location>
    <ligand>
        <name>heme</name>
        <dbReference type="ChEBI" id="CHEBI:30413"/>
    </ligand>
</feature>
<feature type="binding site" description="axial binding residue" evidence="1">
    <location>
        <position position="132"/>
    </location>
    <ligand>
        <name>heme</name>
        <dbReference type="ChEBI" id="CHEBI:30413"/>
    </ligand>
    <ligandPart>
        <name>Fe</name>
        <dbReference type="ChEBI" id="CHEBI:18248"/>
    </ligandPart>
</feature>
<feature type="binding site" evidence="2">
    <location>
        <position position="136"/>
    </location>
    <ligand>
        <name>heme</name>
        <dbReference type="ChEBI" id="CHEBI:30413"/>
    </ligand>
</feature>
<feature type="modified residue" description="Pentaglycyl murein peptidoglycan amidated threonine" evidence="2">
    <location>
        <position position="192"/>
    </location>
</feature>
<proteinExistence type="evidence at protein level"/>
<keyword id="KW-0134">Cell wall</keyword>
<keyword id="KW-0349">Heme</keyword>
<keyword id="KW-0408">Iron</keyword>
<keyword id="KW-0479">Metal-binding</keyword>
<keyword id="KW-0572">Peptidoglycan-anchor</keyword>
<keyword id="KW-0964">Secreted</keyword>
<keyword id="KW-0732">Signal</keyword>
<dbReference type="EMBL" id="AP009351">
    <property type="protein sequence ID" value="BAF67314.1"/>
    <property type="molecule type" value="Genomic_DNA"/>
</dbReference>
<dbReference type="RefSeq" id="WP_000789821.1">
    <property type="nucleotide sequence ID" value="NZ_JBBIAE010000001.1"/>
</dbReference>
<dbReference type="BMRB" id="A6QG32"/>
<dbReference type="SMR" id="A6QG32"/>
<dbReference type="KEGG" id="sae:NWMN_1042"/>
<dbReference type="HOGENOM" id="CLU_092243_1_0_9"/>
<dbReference type="Proteomes" id="UP000006386">
    <property type="component" value="Chromosome"/>
</dbReference>
<dbReference type="GO" id="GO:0005576">
    <property type="term" value="C:extracellular region"/>
    <property type="evidence" value="ECO:0007669"/>
    <property type="project" value="UniProtKB-KW"/>
</dbReference>
<dbReference type="GO" id="GO:0009274">
    <property type="term" value="C:peptidoglycan-based cell wall"/>
    <property type="evidence" value="ECO:0007669"/>
    <property type="project" value="InterPro"/>
</dbReference>
<dbReference type="GO" id="GO:0030492">
    <property type="term" value="F:hemoglobin binding"/>
    <property type="evidence" value="ECO:0007669"/>
    <property type="project" value="InterPro"/>
</dbReference>
<dbReference type="GO" id="GO:0046872">
    <property type="term" value="F:metal ion binding"/>
    <property type="evidence" value="ECO:0007669"/>
    <property type="project" value="UniProtKB-KW"/>
</dbReference>
<dbReference type="GO" id="GO:0015886">
    <property type="term" value="P:heme transport"/>
    <property type="evidence" value="ECO:0007669"/>
    <property type="project" value="InterPro"/>
</dbReference>
<dbReference type="CDD" id="cd06920">
    <property type="entry name" value="NEAT"/>
    <property type="match status" value="1"/>
</dbReference>
<dbReference type="Gene3D" id="2.60.40.1850">
    <property type="match status" value="1"/>
</dbReference>
<dbReference type="InterPro" id="IPR019909">
    <property type="entry name" value="Haem_uptake_protein_IsdC"/>
</dbReference>
<dbReference type="InterPro" id="IPR050436">
    <property type="entry name" value="IsdA"/>
</dbReference>
<dbReference type="InterPro" id="IPR006635">
    <property type="entry name" value="NEAT_dom"/>
</dbReference>
<dbReference type="InterPro" id="IPR037250">
    <property type="entry name" value="NEAT_dom_sf"/>
</dbReference>
<dbReference type="InterPro" id="IPR017505">
    <property type="entry name" value="Sortase_SrtB_sig_NPQTN"/>
</dbReference>
<dbReference type="NCBIfam" id="TIGR03656">
    <property type="entry name" value="IsdC"/>
    <property type="match status" value="1"/>
</dbReference>
<dbReference type="NCBIfam" id="TIGR03068">
    <property type="entry name" value="srtB_sig_NPQTN"/>
    <property type="match status" value="1"/>
</dbReference>
<dbReference type="PANTHER" id="PTHR37824">
    <property type="entry name" value="IRON-REGULATED SURFACE DETERMINANT PROTEIN C"/>
    <property type="match status" value="1"/>
</dbReference>
<dbReference type="PANTHER" id="PTHR37824:SF1">
    <property type="entry name" value="IRON-REGULATED SURFACE DETERMINANT PROTEIN C"/>
    <property type="match status" value="1"/>
</dbReference>
<dbReference type="Pfam" id="PF05031">
    <property type="entry name" value="NEAT"/>
    <property type="match status" value="1"/>
</dbReference>
<dbReference type="SMART" id="SM00725">
    <property type="entry name" value="NEAT"/>
    <property type="match status" value="1"/>
</dbReference>
<dbReference type="SUPFAM" id="SSF158911">
    <property type="entry name" value="NEAT domain-like"/>
    <property type="match status" value="1"/>
</dbReference>
<dbReference type="PROSITE" id="PS50978">
    <property type="entry name" value="NEAT"/>
    <property type="match status" value="1"/>
</dbReference>
<evidence type="ECO:0000250" key="1"/>
<evidence type="ECO:0000250" key="2">
    <source>
        <dbReference type="UniProtKB" id="Q8KQR1"/>
    </source>
</evidence>
<evidence type="ECO:0000255" key="3"/>
<evidence type="ECO:0000255" key="4">
    <source>
        <dbReference type="PROSITE-ProRule" id="PRU00337"/>
    </source>
</evidence>
<evidence type="ECO:0000256" key="5">
    <source>
        <dbReference type="SAM" id="MobiDB-lite"/>
    </source>
</evidence>
<evidence type="ECO:0000269" key="6">
    <source>
    </source>
</evidence>
<evidence type="ECO:0000305" key="7"/>
<protein>
    <recommendedName>
        <fullName>Iron-regulated surface determinant protein C</fullName>
    </recommendedName>
    <alternativeName>
        <fullName>Staphylococcal iron-regulated protein D</fullName>
    </alternativeName>
</protein>
<gene>
    <name type="primary">isdC</name>
    <name type="synonym">sirD</name>
    <name type="ordered locus">NWMN_1042</name>
</gene>
<sequence>MKNILKVFNTTILALIIIIATFSNSANAADSGTLNYEVYKYNTNDTSIANDYFNKPAKYIKKNGKLYVQITVNHSHWITGMSIEGHKENIISKNTAKDERTSEFEVSKLNGKIDGKIDVYIDEKVNGKPFKYDHHYNITYKFNGPTDVAGANAPGKDDKNSASGSDKGSDGTTTGQSESNSSNKDKVENPQTNAGTPAYIYAIPVASLALLIAITLFVRKKSKGNVE</sequence>
<accession>A6QG32</accession>
<reference key="1">
    <citation type="journal article" date="2008" name="J. Bacteriol.">
        <title>Genome sequence of Staphylococcus aureus strain Newman and comparative analysis of staphylococcal genomes: polymorphism and evolution of two major pathogenicity islands.</title>
        <authorList>
            <person name="Baba T."/>
            <person name="Bae T."/>
            <person name="Schneewind O."/>
            <person name="Takeuchi F."/>
            <person name="Hiramatsu K."/>
        </authorList>
    </citation>
    <scope>NUCLEOTIDE SEQUENCE [LARGE SCALE GENOMIC DNA]</scope>
    <source>
        <strain>Newman</strain>
    </source>
</reference>
<reference key="2">
    <citation type="journal article" date="2003" name="Science">
        <title>Passage of heme-iron across the envelope of Staphylococcus aureus.</title>
        <authorList>
            <person name="Mazmanian S.K."/>
            <person name="Skaar E.P."/>
            <person name="Gaspar A.H."/>
            <person name="Humayun M."/>
            <person name="Gornicki P."/>
            <person name="Jelenska J."/>
            <person name="Joachmiak A."/>
            <person name="Missiakas D.M."/>
            <person name="Schneewind O."/>
        </authorList>
    </citation>
    <scope>BINDING TO HEME-IRON AND HEMOGLOBIN</scope>
    <scope>IRON-REGULATED EXPRESSION</scope>
    <scope>SUBCELLULAR LOCATION</scope>
</reference>
<comment type="function">
    <text evidence="1">Involved in heme (porphyrin) scavenging. Binds hemoglobin and almost exclusively free-base protoporphyrin IX. Probably has a role as the central conduit of the isd heme uptake system, i.e. mediates the transfer of the iron-containing nutrient from IsdABH to the membrane translocation system IsdDEF. Hemin-free IsdC (apo-IsdC) acquires hemin from hemin-containing IsdA (holo-IsdA) probably through the activated holo-IsdA-apo-IsdC complex and due to the higher affinity of apo-IsdC for the cofactor. The reaction is reversible (By similarity).</text>
</comment>
<comment type="subunit">
    <text evidence="1">Monomer. Interacts with IsdA (By similarity).</text>
</comment>
<comment type="subcellular location">
    <subcellularLocation>
        <location evidence="6">Secreted</location>
        <location evidence="6">Cell wall</location>
        <topology evidence="6">Peptidoglycan-anchor</topology>
    </subcellularLocation>
    <text evidence="2">Anchored to the cell wall by sortase B (By similarity).</text>
</comment>
<comment type="induction">
    <text evidence="1">Repressed by fur in the presence of iron.</text>
</comment>
<comment type="domain">
    <text evidence="1">The NEAT domain binds Fe(3+) heme iron. Reduction of the high-spin Fe(3+) heme iron to high-spin Fe(2+) results in loss of the heme from the binding site of the protein due to the absence of a proximal histidine (By similarity).</text>
</comment>
<comment type="similarity">
    <text evidence="7">Belongs to the IsdC family.</text>
</comment>
<organism>
    <name type="scientific">Staphylococcus aureus (strain Newman)</name>
    <dbReference type="NCBI Taxonomy" id="426430"/>
    <lineage>
        <taxon>Bacteria</taxon>
        <taxon>Bacillati</taxon>
        <taxon>Bacillota</taxon>
        <taxon>Bacilli</taxon>
        <taxon>Bacillales</taxon>
        <taxon>Staphylococcaceae</taxon>
        <taxon>Staphylococcus</taxon>
    </lineage>
</organism>